<proteinExistence type="inferred from homology"/>
<name>RNPA_MYCLB</name>
<reference key="1">
    <citation type="journal article" date="2009" name="Nat. Genet.">
        <title>Comparative genomic and phylogeographic analysis of Mycobacterium leprae.</title>
        <authorList>
            <person name="Monot M."/>
            <person name="Honore N."/>
            <person name="Garnier T."/>
            <person name="Zidane N."/>
            <person name="Sherafi D."/>
            <person name="Paniz-Mondolfi A."/>
            <person name="Matsuoka M."/>
            <person name="Taylor G.M."/>
            <person name="Donoghue H.D."/>
            <person name="Bouwman A."/>
            <person name="Mays S."/>
            <person name="Watson C."/>
            <person name="Lockwood D."/>
            <person name="Khamispour A."/>
            <person name="Dowlati Y."/>
            <person name="Jianping S."/>
            <person name="Rea T.H."/>
            <person name="Vera-Cabrera L."/>
            <person name="Stefani M.M."/>
            <person name="Banu S."/>
            <person name="Macdonald M."/>
            <person name="Sapkota B.R."/>
            <person name="Spencer J.S."/>
            <person name="Thomas J."/>
            <person name="Harshman K."/>
            <person name="Singh P."/>
            <person name="Busso P."/>
            <person name="Gattiker A."/>
            <person name="Rougemont J."/>
            <person name="Brennan P.J."/>
            <person name="Cole S.T."/>
        </authorList>
    </citation>
    <scope>NUCLEOTIDE SEQUENCE [LARGE SCALE GENOMIC DNA]</scope>
    <source>
        <strain>Br4923</strain>
    </source>
</reference>
<protein>
    <recommendedName>
        <fullName evidence="1">Ribonuclease P protein component</fullName>
        <shortName evidence="1">RNase P protein</shortName>
        <shortName evidence="1">RNaseP protein</shortName>
        <ecNumber evidence="1">3.1.26.5</ecNumber>
    </recommendedName>
    <alternativeName>
        <fullName evidence="1">Protein C5</fullName>
    </alternativeName>
</protein>
<accession>B8ZTN6</accession>
<sequence length="120" mass="13359">MLSACNRMRRSSEFDATVKFGLRAVQSDVIIHVWRGCNRDETKAPHVGLIIAKTVGSAVERHRVARRLRHVARTMLGELGGADQVVIRALPSSRNVSSAWLAQQLRNGLRCALDLAETDW</sequence>
<keyword id="KW-0255">Endonuclease</keyword>
<keyword id="KW-0378">Hydrolase</keyword>
<keyword id="KW-0540">Nuclease</keyword>
<keyword id="KW-0694">RNA-binding</keyword>
<keyword id="KW-0819">tRNA processing</keyword>
<comment type="function">
    <text evidence="1">RNaseP catalyzes the removal of the 5'-leader sequence from pre-tRNA to produce the mature 5'-terminus. It can also cleave other RNA substrates such as 4.5S RNA. The protein component plays an auxiliary but essential role in vivo by binding to the 5'-leader sequence and broadening the substrate specificity of the ribozyme.</text>
</comment>
<comment type="catalytic activity">
    <reaction evidence="1">
        <text>Endonucleolytic cleavage of RNA, removing 5'-extranucleotides from tRNA precursor.</text>
        <dbReference type="EC" id="3.1.26.5"/>
    </reaction>
</comment>
<comment type="subunit">
    <text evidence="1">Consists of a catalytic RNA component (M1 or rnpB) and a protein subunit.</text>
</comment>
<comment type="similarity">
    <text evidence="1">Belongs to the RnpA family.</text>
</comment>
<organism>
    <name type="scientific">Mycobacterium leprae (strain Br4923)</name>
    <dbReference type="NCBI Taxonomy" id="561304"/>
    <lineage>
        <taxon>Bacteria</taxon>
        <taxon>Bacillati</taxon>
        <taxon>Actinomycetota</taxon>
        <taxon>Actinomycetes</taxon>
        <taxon>Mycobacteriales</taxon>
        <taxon>Mycobacteriaceae</taxon>
        <taxon>Mycobacterium</taxon>
    </lineage>
</organism>
<evidence type="ECO:0000255" key="1">
    <source>
        <dbReference type="HAMAP-Rule" id="MF_00227"/>
    </source>
</evidence>
<gene>
    <name evidence="1" type="primary">rnpA</name>
    <name type="ordered locus">MLBr02712</name>
</gene>
<dbReference type="EC" id="3.1.26.5" evidence="1"/>
<dbReference type="EMBL" id="FM211192">
    <property type="protein sequence ID" value="CAR72812.1"/>
    <property type="molecule type" value="Genomic_DNA"/>
</dbReference>
<dbReference type="SMR" id="B8ZTN6"/>
<dbReference type="KEGG" id="mlb:MLBr02712"/>
<dbReference type="HOGENOM" id="CLU_117179_4_1_11"/>
<dbReference type="Proteomes" id="UP000006900">
    <property type="component" value="Chromosome"/>
</dbReference>
<dbReference type="GO" id="GO:0030677">
    <property type="term" value="C:ribonuclease P complex"/>
    <property type="evidence" value="ECO:0007669"/>
    <property type="project" value="TreeGrafter"/>
</dbReference>
<dbReference type="GO" id="GO:0042781">
    <property type="term" value="F:3'-tRNA processing endoribonuclease activity"/>
    <property type="evidence" value="ECO:0007669"/>
    <property type="project" value="TreeGrafter"/>
</dbReference>
<dbReference type="GO" id="GO:0004526">
    <property type="term" value="F:ribonuclease P activity"/>
    <property type="evidence" value="ECO:0007669"/>
    <property type="project" value="UniProtKB-UniRule"/>
</dbReference>
<dbReference type="GO" id="GO:0000049">
    <property type="term" value="F:tRNA binding"/>
    <property type="evidence" value="ECO:0007669"/>
    <property type="project" value="UniProtKB-UniRule"/>
</dbReference>
<dbReference type="GO" id="GO:0001682">
    <property type="term" value="P:tRNA 5'-leader removal"/>
    <property type="evidence" value="ECO:0007669"/>
    <property type="project" value="UniProtKB-UniRule"/>
</dbReference>
<dbReference type="Gene3D" id="3.30.230.10">
    <property type="match status" value="1"/>
</dbReference>
<dbReference type="HAMAP" id="MF_00227">
    <property type="entry name" value="RNase_P"/>
    <property type="match status" value="1"/>
</dbReference>
<dbReference type="InterPro" id="IPR020568">
    <property type="entry name" value="Ribosomal_Su5_D2-typ_SF"/>
</dbReference>
<dbReference type="InterPro" id="IPR014721">
    <property type="entry name" value="Ribsml_uS5_D2-typ_fold_subgr"/>
</dbReference>
<dbReference type="InterPro" id="IPR000100">
    <property type="entry name" value="RNase_P"/>
</dbReference>
<dbReference type="InterPro" id="IPR020539">
    <property type="entry name" value="RNase_P_CS"/>
</dbReference>
<dbReference type="NCBIfam" id="TIGR00188">
    <property type="entry name" value="rnpA"/>
    <property type="match status" value="1"/>
</dbReference>
<dbReference type="PANTHER" id="PTHR33992">
    <property type="entry name" value="RIBONUCLEASE P PROTEIN COMPONENT"/>
    <property type="match status" value="1"/>
</dbReference>
<dbReference type="PANTHER" id="PTHR33992:SF1">
    <property type="entry name" value="RIBONUCLEASE P PROTEIN COMPONENT"/>
    <property type="match status" value="1"/>
</dbReference>
<dbReference type="Pfam" id="PF00825">
    <property type="entry name" value="Ribonuclease_P"/>
    <property type="match status" value="1"/>
</dbReference>
<dbReference type="SUPFAM" id="SSF54211">
    <property type="entry name" value="Ribosomal protein S5 domain 2-like"/>
    <property type="match status" value="1"/>
</dbReference>
<dbReference type="PROSITE" id="PS00648">
    <property type="entry name" value="RIBONUCLEASE_P"/>
    <property type="match status" value="1"/>
</dbReference>
<feature type="chain" id="PRO_1000194651" description="Ribonuclease P protein component">
    <location>
        <begin position="1"/>
        <end position="120"/>
    </location>
</feature>